<organism>
    <name type="scientific">Chlamydia trachomatis serovar D (strain ATCC VR-885 / DSM 19411 / UW-3/Cx)</name>
    <dbReference type="NCBI Taxonomy" id="272561"/>
    <lineage>
        <taxon>Bacteria</taxon>
        <taxon>Pseudomonadati</taxon>
        <taxon>Chlamydiota</taxon>
        <taxon>Chlamydiia</taxon>
        <taxon>Chlamydiales</taxon>
        <taxon>Chlamydiaceae</taxon>
        <taxon>Chlamydia/Chlamydophila group</taxon>
        <taxon>Chlamydia</taxon>
    </lineage>
</organism>
<accession>O84253</accession>
<protein>
    <recommendedName>
        <fullName>Membrane protein insertase YidC</fullName>
    </recommendedName>
    <alternativeName>
        <fullName>Foldase YidC</fullName>
    </alternativeName>
    <alternativeName>
        <fullName>Membrane integrase YidC</fullName>
    </alternativeName>
    <alternativeName>
        <fullName>Membrane protein YidC</fullName>
    </alternativeName>
</protein>
<dbReference type="EMBL" id="AE001273">
    <property type="protein sequence ID" value="AAC67844.1"/>
    <property type="molecule type" value="Genomic_DNA"/>
</dbReference>
<dbReference type="PIR" id="E71537">
    <property type="entry name" value="E71537"/>
</dbReference>
<dbReference type="RefSeq" id="NP_219756.1">
    <property type="nucleotide sequence ID" value="NC_000117.1"/>
</dbReference>
<dbReference type="RefSeq" id="WP_010725139.1">
    <property type="nucleotide sequence ID" value="NC_000117.1"/>
</dbReference>
<dbReference type="SMR" id="O84253"/>
<dbReference type="STRING" id="272561.CT_251"/>
<dbReference type="EnsemblBacteria" id="AAC67844">
    <property type="protein sequence ID" value="AAC67844"/>
    <property type="gene ID" value="CT_251"/>
</dbReference>
<dbReference type="GeneID" id="884867"/>
<dbReference type="KEGG" id="ctr:CT_251"/>
<dbReference type="PATRIC" id="fig|272561.5.peg.268"/>
<dbReference type="HOGENOM" id="CLU_019734_0_0_0"/>
<dbReference type="InParanoid" id="O84253"/>
<dbReference type="OrthoDB" id="9780552at2"/>
<dbReference type="Proteomes" id="UP000000431">
    <property type="component" value="Chromosome"/>
</dbReference>
<dbReference type="GO" id="GO:0005886">
    <property type="term" value="C:plasma membrane"/>
    <property type="evidence" value="ECO:0000318"/>
    <property type="project" value="GO_Central"/>
</dbReference>
<dbReference type="GO" id="GO:0032977">
    <property type="term" value="F:membrane insertase activity"/>
    <property type="evidence" value="ECO:0000318"/>
    <property type="project" value="GO_Central"/>
</dbReference>
<dbReference type="GO" id="GO:0051205">
    <property type="term" value="P:protein insertion into membrane"/>
    <property type="evidence" value="ECO:0000318"/>
    <property type="project" value="GO_Central"/>
</dbReference>
<dbReference type="GO" id="GO:0015031">
    <property type="term" value="P:protein transport"/>
    <property type="evidence" value="ECO:0007669"/>
    <property type="project" value="UniProtKB-KW"/>
</dbReference>
<dbReference type="CDD" id="cd20070">
    <property type="entry name" value="5TM_YidC_Alb3"/>
    <property type="match status" value="1"/>
</dbReference>
<dbReference type="HAMAP" id="MF_01810">
    <property type="entry name" value="YidC_type1"/>
    <property type="match status" value="1"/>
</dbReference>
<dbReference type="InterPro" id="IPR019998">
    <property type="entry name" value="Membr_insert_YidC"/>
</dbReference>
<dbReference type="InterPro" id="IPR001708">
    <property type="entry name" value="YidC/ALB3/OXA1/COX18"/>
</dbReference>
<dbReference type="InterPro" id="IPR028055">
    <property type="entry name" value="YidC/Oxa/ALB_C"/>
</dbReference>
<dbReference type="InterPro" id="IPR047196">
    <property type="entry name" value="YidC_ALB_C"/>
</dbReference>
<dbReference type="NCBIfam" id="NF002168">
    <property type="entry name" value="PRK01001.1"/>
    <property type="match status" value="1"/>
</dbReference>
<dbReference type="NCBIfam" id="TIGR03592">
    <property type="entry name" value="yidC_oxa1_cterm"/>
    <property type="match status" value="1"/>
</dbReference>
<dbReference type="PANTHER" id="PTHR12428:SF65">
    <property type="entry name" value="CYTOCHROME C OXIDASE ASSEMBLY PROTEIN COX18, MITOCHONDRIAL"/>
    <property type="match status" value="1"/>
</dbReference>
<dbReference type="PANTHER" id="PTHR12428">
    <property type="entry name" value="OXA1"/>
    <property type="match status" value="1"/>
</dbReference>
<dbReference type="Pfam" id="PF02096">
    <property type="entry name" value="60KD_IMP"/>
    <property type="match status" value="1"/>
</dbReference>
<dbReference type="PRINTS" id="PR01900">
    <property type="entry name" value="YIDCPROTEIN"/>
</dbReference>
<dbReference type="PROSITE" id="PS51257">
    <property type="entry name" value="PROKAR_LIPOPROTEIN"/>
    <property type="match status" value="1"/>
</dbReference>
<gene>
    <name type="primary">yidC</name>
    <name type="ordered locus">CT_251</name>
</gene>
<feature type="signal peptide" evidence="2">
    <location>
        <begin position="1"/>
        <end position="20"/>
    </location>
</feature>
<feature type="chain" id="PRO_0000124707" description="Membrane protein insertase YidC">
    <location>
        <begin position="21"/>
        <end position="787"/>
    </location>
</feature>
<feature type="transmembrane region" description="Helical" evidence="2">
    <location>
        <begin position="170"/>
        <end position="190"/>
    </location>
</feature>
<feature type="transmembrane region" description="Helical" evidence="2">
    <location>
        <begin position="565"/>
        <end position="585"/>
    </location>
</feature>
<feature type="transmembrane region" description="Helical" evidence="2">
    <location>
        <begin position="636"/>
        <end position="656"/>
    </location>
</feature>
<feature type="transmembrane region" description="Helical" evidence="2">
    <location>
        <begin position="688"/>
        <end position="708"/>
    </location>
</feature>
<feature type="transmembrane region" description="Helical" evidence="2">
    <location>
        <begin position="735"/>
        <end position="755"/>
    </location>
</feature>
<feature type="lipid moiety-binding region" description="N-palmitoyl cysteine" evidence="2">
    <location>
        <position position="21"/>
    </location>
</feature>
<feature type="lipid moiety-binding region" description="S-diacylglycerol cysteine" evidence="2">
    <location>
        <position position="21"/>
    </location>
</feature>
<proteinExistence type="inferred from homology"/>
<evidence type="ECO:0000250" key="1"/>
<evidence type="ECO:0000255" key="2"/>
<evidence type="ECO:0000305" key="3"/>
<reference key="1">
    <citation type="journal article" date="1998" name="Science">
        <title>Genome sequence of an obligate intracellular pathogen of humans: Chlamydia trachomatis.</title>
        <authorList>
            <person name="Stephens R.S."/>
            <person name="Kalman S."/>
            <person name="Lammel C.J."/>
            <person name="Fan J."/>
            <person name="Marathe R."/>
            <person name="Aravind L."/>
            <person name="Mitchell W.P."/>
            <person name="Olinger L."/>
            <person name="Tatusov R.L."/>
            <person name="Zhao Q."/>
            <person name="Koonin E.V."/>
            <person name="Davis R.W."/>
        </authorList>
    </citation>
    <scope>NUCLEOTIDE SEQUENCE [LARGE SCALE GENOMIC DNA]</scope>
    <source>
        <strain>ATCC VR-885 / DSM 19411 / UW-3/Cx</strain>
    </source>
</reference>
<sequence>MRMNKRTLLFVSLVSAAFLGCQIFFGYRDLKSCQDLAEKQRAISEQILASTEQLSVVPWTASLEESESVNQYAIRLGNRLLLLTKGGSHPEVYSRGTYWSLIEQTSTFGGILVSLYGETGQEVLSKGSSVYLPNQRDAFPVLVAEFRSNQEPLVFLGEYKDGKIANKAGAIYGTSLVFLNTGNGFVPLGIYNSKEECVESLDLPMARAVVFADKENPTASGSYYMLSNEYMQIVVSQESGAIEGINLPFASDQEENKSIVNEIGFDRELAINSPSEASFPGVETIDSQRQNIANVVGGYYPLLRRGTLSDVKKRVPAQYQALNIVSGRELASPVATGFRVVSFDNKTLILESGDGGIRRTYSLGEQPYAFELEIQTTQGREDLWITSGVPEVEIMSNAFVPAVKYHAVKKNKSDLFNVKLPKAKDSLLVRNNATPQWILNSNGYFGVILTPRIPIPAGYASSFIPGNVVPTRLSQLPPKDQAYPASKYPGYTAMLPLPKEAGRYQFMVYAGPLADPTLKALDRANANSKGETPEYVDAIAFRGFFSFITEPFAALLFVIMKFFKFLTGSWGISIILLTIVLKLLLYPLNAWSIRSMRRMQKLSPYIQEIQQKYKREPKRAQMEIMALYKMNKVNPITGCLPLLIQIPFLIAMFDLLKSSFLLRGASFIPGWIDNLTAPDVLFSWETPIWFIGKEFHLLPILLGVVMFAQQKISAVKRSGPASDQQRQQEAMGTMMALLFTFMFYNFPSGLNIYWFSSMLLGVIQQWVTNKILDEKHLQHEVIINKKR</sequence>
<comment type="function">
    <text evidence="1">Required for the insertion and/or proper folding and/or complex formation of integral membrane proteins into the membrane. Involved in integration of membrane proteins that insert both dependently and independently of the Sec translocase complex, as well as at least some lipoproteins. Aids folding of multispanning membrane proteins (By similarity).</text>
</comment>
<comment type="subunit">
    <text evidence="1">Interacts with the Sec translocase complex via SecD. Specifically interacts with transmembrane segments of nascent integral membrane proteins during membrane integration (By similarity).</text>
</comment>
<comment type="subcellular location">
    <subcellularLocation>
        <location evidence="1">Cell inner membrane</location>
        <topology evidence="1">Multi-pass membrane protein</topology>
    </subcellularLocation>
</comment>
<comment type="similarity">
    <text evidence="3">Belongs to the OXA1/ALB3/YidC family. Type 1 subfamily.</text>
</comment>
<name>YIDC_CHLTR</name>
<keyword id="KW-0997">Cell inner membrane</keyword>
<keyword id="KW-1003">Cell membrane</keyword>
<keyword id="KW-0143">Chaperone</keyword>
<keyword id="KW-0449">Lipoprotein</keyword>
<keyword id="KW-0472">Membrane</keyword>
<keyword id="KW-0564">Palmitate</keyword>
<keyword id="KW-0653">Protein transport</keyword>
<keyword id="KW-1185">Reference proteome</keyword>
<keyword id="KW-0732">Signal</keyword>
<keyword id="KW-0812">Transmembrane</keyword>
<keyword id="KW-1133">Transmembrane helix</keyword>
<keyword id="KW-0813">Transport</keyword>